<name>TGT_SALAR</name>
<reference key="1">
    <citation type="submission" date="2007-11" db="EMBL/GenBank/DDBJ databases">
        <authorList>
            <consortium name="The Salmonella enterica serovar Arizonae Genome Sequencing Project"/>
            <person name="McClelland M."/>
            <person name="Sanderson E.K."/>
            <person name="Porwollik S."/>
            <person name="Spieth J."/>
            <person name="Clifton W.S."/>
            <person name="Fulton R."/>
            <person name="Chunyan W."/>
            <person name="Wollam A."/>
            <person name="Shah N."/>
            <person name="Pepin K."/>
            <person name="Bhonagiri V."/>
            <person name="Nash W."/>
            <person name="Johnson M."/>
            <person name="Thiruvilangam P."/>
            <person name="Wilson R."/>
        </authorList>
    </citation>
    <scope>NUCLEOTIDE SEQUENCE [LARGE SCALE GENOMIC DNA]</scope>
    <source>
        <strain>ATCC BAA-731 / CDC346-86 / RSK2980</strain>
    </source>
</reference>
<sequence>MKFELDTTDGRARRGRLVFERGVVETPAFMPVGTYGTVKGMTPEEVEATGAQIILGNTFHLWLRPGQEIMKLHGDLHDFMQWKGPILTDSGGFQVFSLGDIRKITEQGVHFRNPINGDPIFLDPEKSMEIQYDLGSDIVMIFDECTPYPADWDYAKCSMEMSLRWAKRSRDRFDGLGNKNALFGIIQGSVYEDLRDISVKGLVEIGFDGYAVGGLAVGEPKADMHRILEHVCPQIPADKPRYLMGVGKPEDLVEGVRRGIDMFDCVMPTRNARNGHLFVTDGVVKIRNAKHKSDTSPLDAECDCYTCRNYSRAYLHHLDRCNEILGARLNTIHNLRYYQRLMAGLRKAIEEGKLESFVTEFYQRQGRPVPPLNVD</sequence>
<evidence type="ECO:0000255" key="1">
    <source>
        <dbReference type="HAMAP-Rule" id="MF_00168"/>
    </source>
</evidence>
<gene>
    <name evidence="1" type="primary">tgt</name>
    <name type="ordered locus">SARI_02520</name>
</gene>
<keyword id="KW-0328">Glycosyltransferase</keyword>
<keyword id="KW-0479">Metal-binding</keyword>
<keyword id="KW-0671">Queuosine biosynthesis</keyword>
<keyword id="KW-1185">Reference proteome</keyword>
<keyword id="KW-0808">Transferase</keyword>
<keyword id="KW-0819">tRNA processing</keyword>
<keyword id="KW-0862">Zinc</keyword>
<comment type="function">
    <text evidence="1">Catalyzes the base-exchange of a guanine (G) residue with the queuine precursor 7-aminomethyl-7-deazaguanine (PreQ1) at position 34 (anticodon wobble position) in tRNAs with GU(N) anticodons (tRNA-Asp, -Asn, -His and -Tyr). Catalysis occurs through a double-displacement mechanism. The nucleophile active site attacks the C1' of nucleotide 34 to detach the guanine base from the RNA, forming a covalent enzyme-RNA intermediate. The proton acceptor active site deprotonates the incoming PreQ1, allowing a nucleophilic attack on the C1' of the ribose to form the product. After dissociation, two additional enzymatic reactions on the tRNA convert PreQ1 to queuine (Q), resulting in the hypermodified nucleoside queuosine (7-(((4,5-cis-dihydroxy-2-cyclopenten-1-yl)amino)methyl)-7-deazaguanosine).</text>
</comment>
<comment type="catalytic activity">
    <reaction evidence="1">
        <text>7-aminomethyl-7-carbaguanine + guanosine(34) in tRNA = 7-aminomethyl-7-carbaguanosine(34) in tRNA + guanine</text>
        <dbReference type="Rhea" id="RHEA:24104"/>
        <dbReference type="Rhea" id="RHEA-COMP:10341"/>
        <dbReference type="Rhea" id="RHEA-COMP:10342"/>
        <dbReference type="ChEBI" id="CHEBI:16235"/>
        <dbReference type="ChEBI" id="CHEBI:58703"/>
        <dbReference type="ChEBI" id="CHEBI:74269"/>
        <dbReference type="ChEBI" id="CHEBI:82833"/>
        <dbReference type="EC" id="2.4.2.29"/>
    </reaction>
</comment>
<comment type="cofactor">
    <cofactor evidence="1">
        <name>Zn(2+)</name>
        <dbReference type="ChEBI" id="CHEBI:29105"/>
    </cofactor>
    <text evidence="1">Binds 1 zinc ion per subunit.</text>
</comment>
<comment type="pathway">
    <text evidence="1">tRNA modification; tRNA-queuosine biosynthesis.</text>
</comment>
<comment type="subunit">
    <text evidence="1">Homodimer. Within each dimer, one monomer is responsible for RNA recognition and catalysis, while the other monomer binds to the replacement base PreQ1.</text>
</comment>
<comment type="similarity">
    <text evidence="1">Belongs to the queuine tRNA-ribosyltransferase family.</text>
</comment>
<dbReference type="EC" id="2.4.2.29" evidence="1"/>
<dbReference type="EMBL" id="CP000880">
    <property type="protein sequence ID" value="ABX22379.1"/>
    <property type="molecule type" value="Genomic_DNA"/>
</dbReference>
<dbReference type="SMR" id="A9MM57"/>
<dbReference type="STRING" id="41514.SARI_02520"/>
<dbReference type="KEGG" id="ses:SARI_02520"/>
<dbReference type="HOGENOM" id="CLU_022060_0_1_6"/>
<dbReference type="UniPathway" id="UPA00392"/>
<dbReference type="Proteomes" id="UP000002084">
    <property type="component" value="Chromosome"/>
</dbReference>
<dbReference type="GO" id="GO:0005829">
    <property type="term" value="C:cytosol"/>
    <property type="evidence" value="ECO:0007669"/>
    <property type="project" value="TreeGrafter"/>
</dbReference>
<dbReference type="GO" id="GO:0046872">
    <property type="term" value="F:metal ion binding"/>
    <property type="evidence" value="ECO:0007669"/>
    <property type="project" value="UniProtKB-KW"/>
</dbReference>
<dbReference type="GO" id="GO:0008479">
    <property type="term" value="F:tRNA-guanosine(34) queuine transglycosylase activity"/>
    <property type="evidence" value="ECO:0007669"/>
    <property type="project" value="UniProtKB-UniRule"/>
</dbReference>
<dbReference type="GO" id="GO:0008616">
    <property type="term" value="P:queuosine biosynthetic process"/>
    <property type="evidence" value="ECO:0007669"/>
    <property type="project" value="UniProtKB-UniRule"/>
</dbReference>
<dbReference type="GO" id="GO:0002099">
    <property type="term" value="P:tRNA wobble guanine modification"/>
    <property type="evidence" value="ECO:0007669"/>
    <property type="project" value="TreeGrafter"/>
</dbReference>
<dbReference type="GO" id="GO:0101030">
    <property type="term" value="P:tRNA-guanine transglycosylation"/>
    <property type="evidence" value="ECO:0007669"/>
    <property type="project" value="InterPro"/>
</dbReference>
<dbReference type="FunFam" id="3.20.20.105:FF:000001">
    <property type="entry name" value="Queuine tRNA-ribosyltransferase"/>
    <property type="match status" value="1"/>
</dbReference>
<dbReference type="Gene3D" id="3.20.20.105">
    <property type="entry name" value="Queuine tRNA-ribosyltransferase-like"/>
    <property type="match status" value="1"/>
</dbReference>
<dbReference type="HAMAP" id="MF_00168">
    <property type="entry name" value="Q_tRNA_Tgt"/>
    <property type="match status" value="1"/>
</dbReference>
<dbReference type="InterPro" id="IPR050076">
    <property type="entry name" value="ArchSynthase1/Queuine_TRR"/>
</dbReference>
<dbReference type="InterPro" id="IPR004803">
    <property type="entry name" value="TGT"/>
</dbReference>
<dbReference type="InterPro" id="IPR036511">
    <property type="entry name" value="TGT-like_sf"/>
</dbReference>
<dbReference type="InterPro" id="IPR002616">
    <property type="entry name" value="tRNA_ribo_trans-like"/>
</dbReference>
<dbReference type="NCBIfam" id="TIGR00430">
    <property type="entry name" value="Q_tRNA_tgt"/>
    <property type="match status" value="1"/>
</dbReference>
<dbReference type="NCBIfam" id="TIGR00449">
    <property type="entry name" value="tgt_general"/>
    <property type="match status" value="1"/>
</dbReference>
<dbReference type="PANTHER" id="PTHR46499">
    <property type="entry name" value="QUEUINE TRNA-RIBOSYLTRANSFERASE"/>
    <property type="match status" value="1"/>
</dbReference>
<dbReference type="PANTHER" id="PTHR46499:SF1">
    <property type="entry name" value="QUEUINE TRNA-RIBOSYLTRANSFERASE"/>
    <property type="match status" value="1"/>
</dbReference>
<dbReference type="Pfam" id="PF01702">
    <property type="entry name" value="TGT"/>
    <property type="match status" value="1"/>
</dbReference>
<dbReference type="SUPFAM" id="SSF51713">
    <property type="entry name" value="tRNA-guanine transglycosylase"/>
    <property type="match status" value="1"/>
</dbReference>
<accession>A9MM57</accession>
<organism>
    <name type="scientific">Salmonella arizonae (strain ATCC BAA-731 / CDC346-86 / RSK2980)</name>
    <dbReference type="NCBI Taxonomy" id="41514"/>
    <lineage>
        <taxon>Bacteria</taxon>
        <taxon>Pseudomonadati</taxon>
        <taxon>Pseudomonadota</taxon>
        <taxon>Gammaproteobacteria</taxon>
        <taxon>Enterobacterales</taxon>
        <taxon>Enterobacteriaceae</taxon>
        <taxon>Salmonella</taxon>
    </lineage>
</organism>
<proteinExistence type="inferred from homology"/>
<feature type="chain" id="PRO_1000077015" description="Queuine tRNA-ribosyltransferase">
    <location>
        <begin position="1"/>
        <end position="375"/>
    </location>
</feature>
<feature type="region of interest" description="RNA binding" evidence="1">
    <location>
        <begin position="245"/>
        <end position="251"/>
    </location>
</feature>
<feature type="region of interest" description="RNA binding; important for wobble base 34 recognition" evidence="1">
    <location>
        <begin position="269"/>
        <end position="273"/>
    </location>
</feature>
<feature type="active site" description="Proton acceptor" evidence="1">
    <location>
        <position position="89"/>
    </location>
</feature>
<feature type="active site" description="Nucleophile" evidence="1">
    <location>
        <position position="264"/>
    </location>
</feature>
<feature type="binding site" evidence="1">
    <location>
        <begin position="89"/>
        <end position="93"/>
    </location>
    <ligand>
        <name>substrate</name>
    </ligand>
</feature>
<feature type="binding site" evidence="1">
    <location>
        <position position="143"/>
    </location>
    <ligand>
        <name>substrate</name>
    </ligand>
</feature>
<feature type="binding site" evidence="1">
    <location>
        <position position="187"/>
    </location>
    <ligand>
        <name>substrate</name>
    </ligand>
</feature>
<feature type="binding site" evidence="1">
    <location>
        <position position="214"/>
    </location>
    <ligand>
        <name>substrate</name>
    </ligand>
</feature>
<feature type="binding site" evidence="1">
    <location>
        <position position="302"/>
    </location>
    <ligand>
        <name>Zn(2+)</name>
        <dbReference type="ChEBI" id="CHEBI:29105"/>
    </ligand>
</feature>
<feature type="binding site" evidence="1">
    <location>
        <position position="304"/>
    </location>
    <ligand>
        <name>Zn(2+)</name>
        <dbReference type="ChEBI" id="CHEBI:29105"/>
    </ligand>
</feature>
<feature type="binding site" evidence="1">
    <location>
        <position position="307"/>
    </location>
    <ligand>
        <name>Zn(2+)</name>
        <dbReference type="ChEBI" id="CHEBI:29105"/>
    </ligand>
</feature>
<feature type="binding site" evidence="1">
    <location>
        <position position="333"/>
    </location>
    <ligand>
        <name>Zn(2+)</name>
        <dbReference type="ChEBI" id="CHEBI:29105"/>
    </ligand>
</feature>
<protein>
    <recommendedName>
        <fullName evidence="1">Queuine tRNA-ribosyltransferase</fullName>
        <ecNumber evidence="1">2.4.2.29</ecNumber>
    </recommendedName>
    <alternativeName>
        <fullName evidence="1">Guanine insertion enzyme</fullName>
    </alternativeName>
    <alternativeName>
        <fullName evidence="1">tRNA-guanine transglycosylase</fullName>
    </alternativeName>
</protein>